<evidence type="ECO:0000256" key="1">
    <source>
        <dbReference type="SAM" id="MobiDB-lite"/>
    </source>
</evidence>
<evidence type="ECO:0000305" key="2"/>
<protein>
    <recommendedName>
        <fullName>Antigenic heat-stable 120 kDa protein</fullName>
    </recommendedName>
    <alternativeName>
        <fullName>120 kDa antigen</fullName>
    </alternativeName>
    <alternativeName>
        <fullName>Protein PS 120</fullName>
        <shortName>PS120</shortName>
    </alternativeName>
</protein>
<keyword id="KW-0963">Cytoplasm</keyword>
<reference key="1">
    <citation type="journal article" date="2005" name="PLoS Biol.">
        <title>The genome sequence of Rickettsia felis identifies the first putative conjugative plasmid in an obligate intracellular parasite.</title>
        <authorList>
            <person name="Ogata H."/>
            <person name="Renesto P."/>
            <person name="Audic S."/>
            <person name="Robert C."/>
            <person name="Blanc G."/>
            <person name="Fournier P.-E."/>
            <person name="Parinello H."/>
            <person name="Claverie J.-M."/>
            <person name="Raoult D."/>
        </authorList>
    </citation>
    <scope>NUCLEOTIDE SEQUENCE [LARGE SCALE GENOMIC DNA]</scope>
    <source>
        <strain>ATCC VR-1525 / URRWXCal2</strain>
    </source>
</reference>
<reference key="2">
    <citation type="journal article" date="2001" name="Int. J. Syst. Evol. Microbiol.">
        <title>Phylogeny of Rickettsia spp. inferred by comparing sequences of 'gene D', which encodes an intracytoplasmic protein.</title>
        <authorList>
            <person name="Sekeyova Z."/>
            <person name="Roux V."/>
            <person name="Raoult D."/>
        </authorList>
    </citation>
    <scope>NUCLEOTIDE SEQUENCE [GENOMIC DNA] OF 53-1033</scope>
</reference>
<comment type="subcellular location">
    <subcellularLocation>
        <location evidence="2">Cytoplasm</location>
    </subcellularLocation>
</comment>
<gene>
    <name type="primary">sca4</name>
    <name type="synonym">D</name>
    <name type="ordered locus">RF_0725</name>
</gene>
<name>SCA4_RICFE</name>
<dbReference type="EMBL" id="CP000053">
    <property type="protein sequence ID" value="AAY61576.1"/>
    <property type="molecule type" value="Genomic_DNA"/>
</dbReference>
<dbReference type="EMBL" id="AF196973">
    <property type="protein sequence ID" value="AAK31304.1"/>
    <property type="molecule type" value="Genomic_DNA"/>
</dbReference>
<dbReference type="SMR" id="Q9AJ37"/>
<dbReference type="STRING" id="315456.RF_0725"/>
<dbReference type="KEGG" id="rfe:RF_0725"/>
<dbReference type="eggNOG" id="COG5183">
    <property type="taxonomic scope" value="Bacteria"/>
</dbReference>
<dbReference type="HOGENOM" id="CLU_009206_0_0_5"/>
<dbReference type="Proteomes" id="UP000008548">
    <property type="component" value="Chromosome"/>
</dbReference>
<dbReference type="GO" id="GO:0005737">
    <property type="term" value="C:cytoplasm"/>
    <property type="evidence" value="ECO:0007669"/>
    <property type="project" value="UniProtKB-SubCell"/>
</dbReference>
<dbReference type="InterPro" id="IPR020954">
    <property type="entry name" value="Rickettsia_antigen_120kDa"/>
</dbReference>
<dbReference type="NCBIfam" id="NF038365">
    <property type="entry name" value="Sca4_fam"/>
    <property type="match status" value="1"/>
</dbReference>
<dbReference type="Pfam" id="PF12574">
    <property type="entry name" value="120_Rick_ant"/>
    <property type="match status" value="1"/>
</dbReference>
<organism>
    <name type="scientific">Rickettsia felis (strain ATCC VR-1525 / URRWXCal2)</name>
    <name type="common">Rickettsia azadi</name>
    <dbReference type="NCBI Taxonomy" id="315456"/>
    <lineage>
        <taxon>Bacteria</taxon>
        <taxon>Pseudomonadati</taxon>
        <taxon>Pseudomonadota</taxon>
        <taxon>Alphaproteobacteria</taxon>
        <taxon>Rickettsiales</taxon>
        <taxon>Rickettsiaceae</taxon>
        <taxon>Rickettsieae</taxon>
        <taxon>Rickettsia</taxon>
        <taxon>spotted fever group</taxon>
    </lineage>
</organism>
<accession>Q9AJ37</accession>
<accession>Q4ULJ7</accession>
<proteinExistence type="predicted"/>
<sequence>MSKDSDNPGYESGYESDTEEKKQEQAVPAQPISSTANKDGNPDTSEFDPLANKEYTEEQKQKLEQEQKEYFSQTTPQELEADDGFSFTPASSTQSTPSISSLSGGISSDSQTSDPITKAVRETIIQPQKDEIAEQILKDLAALADRDLAEQKRKEIEEEKDKTLSAFFGNPANREFIDKALENPELKKKLESIEIAGYKNVLSTYSAANGYQGGFKPVQWENQISASDLRATVVRNDAGDELCTLNETTVKTKPFTVAKQDGTQVQINSYREIDFPIKLDKADGSMHLSMVALKADGTKPSKDKAVYFTAHYEEGPNGKPQLKEISSPKPLKFAGDGPDAVAYIEHGGEIYTLAVTRGKYKEMMREVELNQGQSVDLSQTIAEDLTKVQGRSQETPQPIITPNQELKSSIETPTTTQVPPITPANQPLQPETSQMPQPQQVNPNLLNAATALSTSMQDLLNYVNAGLTKEKDGNKQIDLINEAATAILNNEKSDIAEKQANIIALTENTVNNNDLTPDTKVAGVNAVLETIKNDQNTPDLEKSKMLEATVAIALNSENLEPKQKQQMLEKAVDVGLSLKDDASRVTAIDGITDAVIKSNLSTEDKGTMLIAVGDKVNASELSNAEKQKLLGSVLKKGVEAQVLSPEQQQLMQQNLDKITAEQTKNAQITEVQGILANPAFNTIAKTEAIQNVTTKVLDSPIKAEIKGETLESITKVVAESPLNGQDKADIVKGMGEAIASHKTMAPTEKISTIESVEKGVAESITDLEDKKLMTKGLVEGIYEGKANPEITSEKTKAVSRGIDKSTAIPEDKQALKDAANEAALDRETQNLTEGLKRQNLGEPKPRDDIYNKAQDVADALKNVITPVLDAHPEKREVSEEEEVVKKTSSILNDISKLAIEKVNNFRAMLSPDGNLKTLEEKKAESTKKVDELVKEFGTKSSTEEQQSFIKANLIDDKTLSKEIRLQTINKLLQEQAQKRAEAIENPNVKTEDVRVVSGVNIKDNIKIMGALMNARDSIIQSENLNKSTPIKRESSFPPR</sequence>
<feature type="chain" id="PRO_0000097611" description="Antigenic heat-stable 120 kDa protein">
    <location>
        <begin position="1"/>
        <end position="1039"/>
    </location>
</feature>
<feature type="region of interest" description="Disordered" evidence="1">
    <location>
        <begin position="1"/>
        <end position="115"/>
    </location>
</feature>
<feature type="region of interest" description="Disordered" evidence="1">
    <location>
        <begin position="408"/>
        <end position="438"/>
    </location>
</feature>
<feature type="region of interest" description="Disordered" evidence="1">
    <location>
        <begin position="1020"/>
        <end position="1039"/>
    </location>
</feature>
<feature type="compositionally biased region" description="Polar residues" evidence="1">
    <location>
        <begin position="31"/>
        <end position="44"/>
    </location>
</feature>
<feature type="compositionally biased region" description="Basic and acidic residues" evidence="1">
    <location>
        <begin position="54"/>
        <end position="69"/>
    </location>
</feature>
<feature type="compositionally biased region" description="Low complexity" evidence="1">
    <location>
        <begin position="85"/>
        <end position="114"/>
    </location>
</feature>
<feature type="compositionally biased region" description="Polar residues" evidence="1">
    <location>
        <begin position="424"/>
        <end position="438"/>
    </location>
</feature>
<feature type="compositionally biased region" description="Basic and acidic residues" evidence="1">
    <location>
        <begin position="1030"/>
        <end position="1039"/>
    </location>
</feature>
<feature type="sequence conflict" description="In Ref. 2; AAK31304." evidence="2" ref="2">
    <original>QKQ</original>
    <variation>EKH</variation>
    <location>
        <begin position="59"/>
        <end position="61"/>
    </location>
</feature>
<feature type="sequence conflict" description="In Ref. 2; AAK31304." evidence="2" ref="2">
    <original>NAAT</original>
    <variation>YATS</variation>
    <location>
        <begin position="447"/>
        <end position="450"/>
    </location>
</feature>
<feature type="sequence conflict" description="In Ref. 2; AAK31304." evidence="2" ref="2">
    <original>L</original>
    <variation>Q</variation>
    <location>
        <position position="559"/>
    </location>
</feature>
<feature type="sequence conflict" description="In Ref. 2; AAK31304." evidence="2" ref="2">
    <original>D</original>
    <variation>V</variation>
    <location>
        <position position="930"/>
    </location>
</feature>